<gene>
    <name evidence="1" type="primary">guaA</name>
    <name type="ordered locus">SP_1445</name>
</gene>
<feature type="chain" id="PRO_0000140188" description="GMP synthase [glutamine-hydrolyzing]">
    <location>
        <begin position="1"/>
        <end position="520"/>
    </location>
</feature>
<feature type="domain" description="Glutamine amidotransferase type-1" evidence="1">
    <location>
        <begin position="13"/>
        <end position="205"/>
    </location>
</feature>
<feature type="domain" description="GMPS ATP-PPase" evidence="1">
    <location>
        <begin position="206"/>
        <end position="395"/>
    </location>
</feature>
<feature type="active site" description="Nucleophile" evidence="1">
    <location>
        <position position="90"/>
    </location>
</feature>
<feature type="active site" evidence="1">
    <location>
        <position position="179"/>
    </location>
</feature>
<feature type="active site" evidence="1">
    <location>
        <position position="181"/>
    </location>
</feature>
<feature type="binding site" evidence="1">
    <location>
        <begin position="233"/>
        <end position="239"/>
    </location>
    <ligand>
        <name>ATP</name>
        <dbReference type="ChEBI" id="CHEBI:30616"/>
    </ligand>
</feature>
<dbReference type="EC" id="6.3.5.2" evidence="1"/>
<dbReference type="EMBL" id="AE005672">
    <property type="protein sequence ID" value="AAK75539.1"/>
    <property type="molecule type" value="Genomic_DNA"/>
</dbReference>
<dbReference type="PIR" id="B95168">
    <property type="entry name" value="B95168"/>
</dbReference>
<dbReference type="RefSeq" id="WP_000065723.1">
    <property type="nucleotide sequence ID" value="NZ_CP155539.1"/>
</dbReference>
<dbReference type="SMR" id="P64297"/>
<dbReference type="PaxDb" id="170187-SP_1445"/>
<dbReference type="EnsemblBacteria" id="AAK75539">
    <property type="protein sequence ID" value="AAK75539"/>
    <property type="gene ID" value="SP_1445"/>
</dbReference>
<dbReference type="GeneID" id="45653302"/>
<dbReference type="KEGG" id="spn:SP_1445"/>
<dbReference type="eggNOG" id="COG0518">
    <property type="taxonomic scope" value="Bacteria"/>
</dbReference>
<dbReference type="eggNOG" id="COG0519">
    <property type="taxonomic scope" value="Bacteria"/>
</dbReference>
<dbReference type="PhylomeDB" id="P64297"/>
<dbReference type="BioCyc" id="SPNE170187:G1FZB-1461-MONOMER"/>
<dbReference type="UniPathway" id="UPA00189">
    <property type="reaction ID" value="UER00296"/>
</dbReference>
<dbReference type="Proteomes" id="UP000000585">
    <property type="component" value="Chromosome"/>
</dbReference>
<dbReference type="GO" id="GO:0005829">
    <property type="term" value="C:cytosol"/>
    <property type="evidence" value="ECO:0007669"/>
    <property type="project" value="TreeGrafter"/>
</dbReference>
<dbReference type="GO" id="GO:0005524">
    <property type="term" value="F:ATP binding"/>
    <property type="evidence" value="ECO:0007669"/>
    <property type="project" value="UniProtKB-UniRule"/>
</dbReference>
<dbReference type="GO" id="GO:0003921">
    <property type="term" value="F:GMP synthase activity"/>
    <property type="evidence" value="ECO:0007669"/>
    <property type="project" value="InterPro"/>
</dbReference>
<dbReference type="CDD" id="cd01742">
    <property type="entry name" value="GATase1_GMP_Synthase"/>
    <property type="match status" value="1"/>
</dbReference>
<dbReference type="CDD" id="cd01997">
    <property type="entry name" value="GMP_synthase_C"/>
    <property type="match status" value="1"/>
</dbReference>
<dbReference type="FunFam" id="3.30.300.10:FF:000002">
    <property type="entry name" value="GMP synthase [glutamine-hydrolyzing]"/>
    <property type="match status" value="1"/>
</dbReference>
<dbReference type="FunFam" id="3.40.50.620:FF:000001">
    <property type="entry name" value="GMP synthase [glutamine-hydrolyzing]"/>
    <property type="match status" value="1"/>
</dbReference>
<dbReference type="FunFam" id="3.40.50.880:FF:000001">
    <property type="entry name" value="GMP synthase [glutamine-hydrolyzing]"/>
    <property type="match status" value="1"/>
</dbReference>
<dbReference type="Gene3D" id="3.30.300.10">
    <property type="match status" value="1"/>
</dbReference>
<dbReference type="Gene3D" id="3.40.50.880">
    <property type="match status" value="1"/>
</dbReference>
<dbReference type="Gene3D" id="3.40.50.620">
    <property type="entry name" value="HUPs"/>
    <property type="match status" value="1"/>
</dbReference>
<dbReference type="HAMAP" id="MF_00344">
    <property type="entry name" value="GMP_synthase"/>
    <property type="match status" value="1"/>
</dbReference>
<dbReference type="InterPro" id="IPR029062">
    <property type="entry name" value="Class_I_gatase-like"/>
</dbReference>
<dbReference type="InterPro" id="IPR017926">
    <property type="entry name" value="GATASE"/>
</dbReference>
<dbReference type="InterPro" id="IPR001674">
    <property type="entry name" value="GMP_synth_C"/>
</dbReference>
<dbReference type="InterPro" id="IPR004739">
    <property type="entry name" value="GMP_synth_GATase"/>
</dbReference>
<dbReference type="InterPro" id="IPR022955">
    <property type="entry name" value="GMP_synthase"/>
</dbReference>
<dbReference type="InterPro" id="IPR025777">
    <property type="entry name" value="GMPS_ATP_PPase_dom"/>
</dbReference>
<dbReference type="InterPro" id="IPR022310">
    <property type="entry name" value="NAD/GMP_synthase"/>
</dbReference>
<dbReference type="InterPro" id="IPR014729">
    <property type="entry name" value="Rossmann-like_a/b/a_fold"/>
</dbReference>
<dbReference type="NCBIfam" id="TIGR00884">
    <property type="entry name" value="guaA_Cterm"/>
    <property type="match status" value="1"/>
</dbReference>
<dbReference type="NCBIfam" id="TIGR00888">
    <property type="entry name" value="guaA_Nterm"/>
    <property type="match status" value="1"/>
</dbReference>
<dbReference type="NCBIfam" id="NF000848">
    <property type="entry name" value="PRK00074.1"/>
    <property type="match status" value="1"/>
</dbReference>
<dbReference type="PANTHER" id="PTHR11922:SF2">
    <property type="entry name" value="GMP SYNTHASE [GLUTAMINE-HYDROLYZING]"/>
    <property type="match status" value="1"/>
</dbReference>
<dbReference type="PANTHER" id="PTHR11922">
    <property type="entry name" value="GMP SYNTHASE-RELATED"/>
    <property type="match status" value="1"/>
</dbReference>
<dbReference type="Pfam" id="PF00117">
    <property type="entry name" value="GATase"/>
    <property type="match status" value="1"/>
</dbReference>
<dbReference type="Pfam" id="PF00958">
    <property type="entry name" value="GMP_synt_C"/>
    <property type="match status" value="1"/>
</dbReference>
<dbReference type="Pfam" id="PF02540">
    <property type="entry name" value="NAD_synthase"/>
    <property type="match status" value="1"/>
</dbReference>
<dbReference type="PRINTS" id="PR00097">
    <property type="entry name" value="ANTSNTHASEII"/>
</dbReference>
<dbReference type="PRINTS" id="PR00099">
    <property type="entry name" value="CPSGATASE"/>
</dbReference>
<dbReference type="PRINTS" id="PR00096">
    <property type="entry name" value="GATASE"/>
</dbReference>
<dbReference type="SUPFAM" id="SSF52402">
    <property type="entry name" value="Adenine nucleotide alpha hydrolases-like"/>
    <property type="match status" value="1"/>
</dbReference>
<dbReference type="SUPFAM" id="SSF52317">
    <property type="entry name" value="Class I glutamine amidotransferase-like"/>
    <property type="match status" value="1"/>
</dbReference>
<dbReference type="PROSITE" id="PS51273">
    <property type="entry name" value="GATASE_TYPE_1"/>
    <property type="match status" value="1"/>
</dbReference>
<dbReference type="PROSITE" id="PS51553">
    <property type="entry name" value="GMPS_ATP_PPASE"/>
    <property type="match status" value="1"/>
</dbReference>
<name>GUAA_STRPN</name>
<sequence>MSNISTDLQDVEKIIVLDYGSQYNQLISRRIREIGVFSELKSHKISAAEVREVNPVGIILSGGPNSVYEDGSFDIDPEIFELGIPILGICYGMQLLTHKLGGKVVPAGDAGNREYGQSTLTHTPSALFESTPDEQTVLMSHGDAVTEIPADFVRTGTSADCPYAAIENPDKHIYGIQFHPEVRHSVYGNDILRNFALNICKAKGDWSMDNFIDMQIKKIRETVGDKRVLLGLSGGVDSSVVGVLLQKAIGDQLICIFVDHGLLRKGEADQVMDMLGGKFGLNIVKADAAKRFLDKLAGVSDPEQKRKIIGNEFVYVFDDEASKLKDVKFLAQGTLYTDVIESGTDTAQTIKSHHNVGGLPEDMQFELIEPLNTLYKDEVRALGTELGMPDHIVWRQPFPGPGLAIRVMGEITEEKLETVRESDAILREEIAKAGLDRDIWQYFTVNTGVRSVGVMGDGRTYDYTIAIRAITSIDGMTADFAKIPWEVLQKISVRIVNEVDHVNRIVYDITSKPPATVEWE</sequence>
<evidence type="ECO:0000255" key="1">
    <source>
        <dbReference type="HAMAP-Rule" id="MF_00344"/>
    </source>
</evidence>
<protein>
    <recommendedName>
        <fullName evidence="1">GMP synthase [glutamine-hydrolyzing]</fullName>
        <ecNumber evidence="1">6.3.5.2</ecNumber>
    </recommendedName>
    <alternativeName>
        <fullName evidence="1">GMP synthetase</fullName>
    </alternativeName>
    <alternativeName>
        <fullName evidence="1">Glutamine amidotransferase</fullName>
    </alternativeName>
</protein>
<reference key="1">
    <citation type="journal article" date="2001" name="Science">
        <title>Complete genome sequence of a virulent isolate of Streptococcus pneumoniae.</title>
        <authorList>
            <person name="Tettelin H."/>
            <person name="Nelson K.E."/>
            <person name="Paulsen I.T."/>
            <person name="Eisen J.A."/>
            <person name="Read T.D."/>
            <person name="Peterson S.N."/>
            <person name="Heidelberg J.F."/>
            <person name="DeBoy R.T."/>
            <person name="Haft D.H."/>
            <person name="Dodson R.J."/>
            <person name="Durkin A.S."/>
            <person name="Gwinn M.L."/>
            <person name="Kolonay J.F."/>
            <person name="Nelson W.C."/>
            <person name="Peterson J.D."/>
            <person name="Umayam L.A."/>
            <person name="White O."/>
            <person name="Salzberg S.L."/>
            <person name="Lewis M.R."/>
            <person name="Radune D."/>
            <person name="Holtzapple E.K."/>
            <person name="Khouri H.M."/>
            <person name="Wolf A.M."/>
            <person name="Utterback T.R."/>
            <person name="Hansen C.L."/>
            <person name="McDonald L.A."/>
            <person name="Feldblyum T.V."/>
            <person name="Angiuoli S.V."/>
            <person name="Dickinson T."/>
            <person name="Hickey E.K."/>
            <person name="Holt I.E."/>
            <person name="Loftus B.J."/>
            <person name="Yang F."/>
            <person name="Smith H.O."/>
            <person name="Venter J.C."/>
            <person name="Dougherty B.A."/>
            <person name="Morrison D.A."/>
            <person name="Hollingshead S.K."/>
            <person name="Fraser C.M."/>
        </authorList>
    </citation>
    <scope>NUCLEOTIDE SEQUENCE [LARGE SCALE GENOMIC DNA]</scope>
    <source>
        <strain>ATCC BAA-334 / TIGR4</strain>
    </source>
</reference>
<comment type="function">
    <text evidence="1">Catalyzes the synthesis of GMP from XMP.</text>
</comment>
<comment type="catalytic activity">
    <reaction evidence="1">
        <text>XMP + L-glutamine + ATP + H2O = GMP + L-glutamate + AMP + diphosphate + 2 H(+)</text>
        <dbReference type="Rhea" id="RHEA:11680"/>
        <dbReference type="ChEBI" id="CHEBI:15377"/>
        <dbReference type="ChEBI" id="CHEBI:15378"/>
        <dbReference type="ChEBI" id="CHEBI:29985"/>
        <dbReference type="ChEBI" id="CHEBI:30616"/>
        <dbReference type="ChEBI" id="CHEBI:33019"/>
        <dbReference type="ChEBI" id="CHEBI:57464"/>
        <dbReference type="ChEBI" id="CHEBI:58115"/>
        <dbReference type="ChEBI" id="CHEBI:58359"/>
        <dbReference type="ChEBI" id="CHEBI:456215"/>
        <dbReference type="EC" id="6.3.5.2"/>
    </reaction>
</comment>
<comment type="pathway">
    <text evidence="1">Purine metabolism; GMP biosynthesis; GMP from XMP (L-Gln route): step 1/1.</text>
</comment>
<comment type="subunit">
    <text evidence="1">Homodimer.</text>
</comment>
<proteinExistence type="inferred from homology"/>
<keyword id="KW-0067">ATP-binding</keyword>
<keyword id="KW-0315">Glutamine amidotransferase</keyword>
<keyword id="KW-0332">GMP biosynthesis</keyword>
<keyword id="KW-0436">Ligase</keyword>
<keyword id="KW-0547">Nucleotide-binding</keyword>
<keyword id="KW-0658">Purine biosynthesis</keyword>
<keyword id="KW-1185">Reference proteome</keyword>
<accession>P64297</accession>
<accession>Q97PZ3</accession>
<organism>
    <name type="scientific">Streptococcus pneumoniae serotype 4 (strain ATCC BAA-334 / TIGR4)</name>
    <dbReference type="NCBI Taxonomy" id="170187"/>
    <lineage>
        <taxon>Bacteria</taxon>
        <taxon>Bacillati</taxon>
        <taxon>Bacillota</taxon>
        <taxon>Bacilli</taxon>
        <taxon>Lactobacillales</taxon>
        <taxon>Streptococcaceae</taxon>
        <taxon>Streptococcus</taxon>
    </lineage>
</organism>